<proteinExistence type="inferred from homology"/>
<keyword id="KW-1185">Reference proteome</keyword>
<keyword id="KW-0949">S-adenosyl-L-methionine</keyword>
<keyword id="KW-0808">Transferase</keyword>
<protein>
    <recommendedName>
        <fullName evidence="1">Carboxy-S-adenosyl-L-methionine synthase</fullName>
        <shortName evidence="1">Cx-SAM synthase</shortName>
        <ecNumber evidence="1">2.1.3.-</ecNumber>
    </recommendedName>
</protein>
<feature type="chain" id="PRO_0000314348" description="Carboxy-S-adenosyl-L-methionine synthase">
    <location>
        <begin position="1"/>
        <end position="239"/>
    </location>
</feature>
<feature type="binding site" evidence="1">
    <location>
        <position position="36"/>
    </location>
    <ligand>
        <name>S-adenosyl-L-methionine</name>
        <dbReference type="ChEBI" id="CHEBI:59789"/>
    </ligand>
</feature>
<feature type="binding site" evidence="1">
    <location>
        <begin position="61"/>
        <end position="63"/>
    </location>
    <ligand>
        <name>S-adenosyl-L-methionine</name>
        <dbReference type="ChEBI" id="CHEBI:59789"/>
    </ligand>
</feature>
<feature type="binding site" evidence="1">
    <location>
        <begin position="111"/>
        <end position="112"/>
    </location>
    <ligand>
        <name>S-adenosyl-L-methionine</name>
        <dbReference type="ChEBI" id="CHEBI:59789"/>
    </ligand>
</feature>
<feature type="binding site" evidence="1">
    <location>
        <position position="126"/>
    </location>
    <ligand>
        <name>S-adenosyl-L-methionine</name>
        <dbReference type="ChEBI" id="CHEBI:59789"/>
    </ligand>
</feature>
<feature type="binding site" evidence="1">
    <location>
        <position position="193"/>
    </location>
    <ligand>
        <name>S-adenosyl-L-methionine</name>
        <dbReference type="ChEBI" id="CHEBI:59789"/>
    </ligand>
</feature>
<dbReference type="EC" id="2.1.3.-" evidence="1"/>
<dbReference type="EMBL" id="AP009178">
    <property type="protein sequence ID" value="BAF70238.1"/>
    <property type="molecule type" value="Genomic_DNA"/>
</dbReference>
<dbReference type="RefSeq" id="WP_012082501.1">
    <property type="nucleotide sequence ID" value="NC_009662.1"/>
</dbReference>
<dbReference type="SMR" id="A6Q429"/>
<dbReference type="FunCoup" id="A6Q429">
    <property type="interactions" value="40"/>
</dbReference>
<dbReference type="STRING" id="387092.NIS_1129"/>
<dbReference type="KEGG" id="nis:NIS_1129"/>
<dbReference type="eggNOG" id="COG4106">
    <property type="taxonomic scope" value="Bacteria"/>
</dbReference>
<dbReference type="HOGENOM" id="CLU_078475_0_0_7"/>
<dbReference type="InParanoid" id="A6Q429"/>
<dbReference type="OrthoDB" id="5386938at2"/>
<dbReference type="Proteomes" id="UP000001118">
    <property type="component" value="Chromosome"/>
</dbReference>
<dbReference type="GO" id="GO:0016743">
    <property type="term" value="F:carboxyl- or carbamoyltransferase activity"/>
    <property type="evidence" value="ECO:0007669"/>
    <property type="project" value="UniProtKB-UniRule"/>
</dbReference>
<dbReference type="GO" id="GO:1904047">
    <property type="term" value="F:S-adenosyl-L-methionine binding"/>
    <property type="evidence" value="ECO:0007669"/>
    <property type="project" value="UniProtKB-UniRule"/>
</dbReference>
<dbReference type="GO" id="GO:0002098">
    <property type="term" value="P:tRNA wobble uridine modification"/>
    <property type="evidence" value="ECO:0007669"/>
    <property type="project" value="InterPro"/>
</dbReference>
<dbReference type="CDD" id="cd02440">
    <property type="entry name" value="AdoMet_MTases"/>
    <property type="match status" value="1"/>
</dbReference>
<dbReference type="Gene3D" id="3.40.50.150">
    <property type="entry name" value="Vaccinia Virus protein VP39"/>
    <property type="match status" value="1"/>
</dbReference>
<dbReference type="HAMAP" id="MF_01589">
    <property type="entry name" value="Cx_SAM_synthase"/>
    <property type="match status" value="1"/>
</dbReference>
<dbReference type="InterPro" id="IPR005271">
    <property type="entry name" value="CmoA"/>
</dbReference>
<dbReference type="InterPro" id="IPR041698">
    <property type="entry name" value="Methyltransf_25"/>
</dbReference>
<dbReference type="InterPro" id="IPR029063">
    <property type="entry name" value="SAM-dependent_MTases_sf"/>
</dbReference>
<dbReference type="NCBIfam" id="TIGR00740">
    <property type="entry name" value="carboxy-S-adenosyl-L-methionine synthase CmoA"/>
    <property type="match status" value="1"/>
</dbReference>
<dbReference type="PANTHER" id="PTHR43861:SF2">
    <property type="entry name" value="CARBOXY-S-ADENOSYL-L-METHIONINE SYNTHASE"/>
    <property type="match status" value="1"/>
</dbReference>
<dbReference type="PANTHER" id="PTHR43861">
    <property type="entry name" value="TRANS-ACONITATE 2-METHYLTRANSFERASE-RELATED"/>
    <property type="match status" value="1"/>
</dbReference>
<dbReference type="Pfam" id="PF13649">
    <property type="entry name" value="Methyltransf_25"/>
    <property type="match status" value="1"/>
</dbReference>
<dbReference type="PIRSF" id="PIRSF006325">
    <property type="entry name" value="MeTrfase_bac"/>
    <property type="match status" value="1"/>
</dbReference>
<dbReference type="SUPFAM" id="SSF53335">
    <property type="entry name" value="S-adenosyl-L-methionine-dependent methyltransferases"/>
    <property type="match status" value="1"/>
</dbReference>
<reference key="1">
    <citation type="journal article" date="2007" name="Proc. Natl. Acad. Sci. U.S.A.">
        <title>Deep-sea vent epsilon-proteobacterial genomes provide insights into emergence of pathogens.</title>
        <authorList>
            <person name="Nakagawa S."/>
            <person name="Takaki Y."/>
            <person name="Shimamura S."/>
            <person name="Reysenbach A.-L."/>
            <person name="Takai K."/>
            <person name="Horikoshi K."/>
        </authorList>
    </citation>
    <scope>NUCLEOTIDE SEQUENCE [LARGE SCALE GENOMIC DNA]</scope>
    <source>
        <strain>SB155-2</strain>
    </source>
</reference>
<comment type="function">
    <text evidence="1">Catalyzes the conversion of S-adenosyl-L-methionine (SAM) to carboxy-S-adenosyl-L-methionine (Cx-SAM).</text>
</comment>
<comment type="catalytic activity">
    <reaction evidence="1">
        <text>prephenate + S-adenosyl-L-methionine = carboxy-S-adenosyl-L-methionine + 3-phenylpyruvate + H2O</text>
        <dbReference type="Rhea" id="RHEA:51692"/>
        <dbReference type="ChEBI" id="CHEBI:15377"/>
        <dbReference type="ChEBI" id="CHEBI:18005"/>
        <dbReference type="ChEBI" id="CHEBI:29934"/>
        <dbReference type="ChEBI" id="CHEBI:59789"/>
        <dbReference type="ChEBI" id="CHEBI:134278"/>
    </reaction>
</comment>
<comment type="subunit">
    <text evidence="1">Homodimer.</text>
</comment>
<comment type="similarity">
    <text evidence="1">Belongs to the class I-like SAM-binding methyltransferase superfamily. Cx-SAM synthase family.</text>
</comment>
<accession>A6Q429</accession>
<sequence>MEKDKVFAKPIEKRFEFDEEVASVFDDMIARSVPFYKENMALVRDIVVKNVVQKDRVYDLGCSTGSLLIDIAKRSPFSLELIGLDSSEAMLQRAHHKAKAFGVSIDFQKADIISYAYKPAKIFISNYTLQFIRPLKREPLVQKIYDALVDEGIFVFSEKVISADKTLDKQLLDIYFDFKKKQGYSDFEIAQKREALENVLVPYTLEENMEMVKKCGFGFVEPIFRWANFVTFVAIKRKK</sequence>
<evidence type="ECO:0000255" key="1">
    <source>
        <dbReference type="HAMAP-Rule" id="MF_01589"/>
    </source>
</evidence>
<name>CMOA_NITSB</name>
<organism>
    <name type="scientific">Nitratiruptor sp. (strain SB155-2)</name>
    <dbReference type="NCBI Taxonomy" id="387092"/>
    <lineage>
        <taxon>Bacteria</taxon>
        <taxon>Pseudomonadati</taxon>
        <taxon>Campylobacterota</taxon>
        <taxon>Epsilonproteobacteria</taxon>
        <taxon>Nautiliales</taxon>
        <taxon>Nitratiruptoraceae</taxon>
        <taxon>Nitratiruptor</taxon>
    </lineage>
</organism>
<gene>
    <name evidence="1" type="primary">cmoA</name>
    <name type="ordered locus">NIS_1129</name>
</gene>